<organism>
    <name type="scientific">Danio rerio</name>
    <name type="common">Zebrafish</name>
    <name type="synonym">Brachydanio rerio</name>
    <dbReference type="NCBI Taxonomy" id="7955"/>
    <lineage>
        <taxon>Eukaryota</taxon>
        <taxon>Metazoa</taxon>
        <taxon>Chordata</taxon>
        <taxon>Craniata</taxon>
        <taxon>Vertebrata</taxon>
        <taxon>Euteleostomi</taxon>
        <taxon>Actinopterygii</taxon>
        <taxon>Neopterygii</taxon>
        <taxon>Teleostei</taxon>
        <taxon>Ostariophysi</taxon>
        <taxon>Cypriniformes</taxon>
        <taxon>Danionidae</taxon>
        <taxon>Danioninae</taxon>
        <taxon>Danio</taxon>
    </lineage>
</organism>
<accession>A7YT82</accession>
<accession>F1QBV9</accession>
<keyword id="KW-0012">Acyltransferase</keyword>
<keyword id="KW-0963">Cytoplasm</keyword>
<keyword id="KW-0472">Membrane</keyword>
<keyword id="KW-1185">Reference proteome</keyword>
<keyword id="KW-0808">Transferase</keyword>
<sequence length="492" mass="56347">MAEDSESAASQQSLELDDQDTCGIDGDNEEENEHMQGSPGGDLGAKKKKKKQKRKKEKPSSGGTKSDSASDSQEIKNPAIPMQKLQDIQRAMELLSTCQGPAKNIDEATKHKYQFWDTQPVPKLNEVVTTHGPIEPDKENIRQEPYSLPQGFMWDTLDLSNAEVLKELYTLLNENYVEDDDNMFRFDYSPNFLKWALRPPGWLPHWHCGVRVSSNKKLVGFISAIPADIHIYDTLKRMVEINFLCVHKKLRSKRVAPVLIREITRRVNLEGIFQAVYTAGVVLPKPVSTCRYWHRSLNPRKLVEVKFSHLSRNMTLQRTMKLYRLPDSTRTPGLRTMGDRDVKQVTALLQKHLSQFHLRPVMGEEEVKHWFLPQENIIDTFVVEGSGGMLTDFISFYTLPSTVMHHPLHKSLKAAYSFYNVHTETPLIDLMNDALILAKLKGFDVFNALDLMDNKNFLEKLKFGIGDGNLQYYLYNWKCPPMDPEKVGLVLQ</sequence>
<feature type="chain" id="PRO_0000413005" description="Glycylpeptide N-tetradecanoyltransferase 2">
    <location>
        <begin position="1"/>
        <end position="492"/>
    </location>
</feature>
<feature type="region of interest" description="Disordered" evidence="3">
    <location>
        <begin position="1"/>
        <end position="77"/>
    </location>
</feature>
<feature type="compositionally biased region" description="Acidic residues" evidence="3">
    <location>
        <begin position="15"/>
        <end position="32"/>
    </location>
</feature>
<feature type="compositionally biased region" description="Basic residues" evidence="3">
    <location>
        <begin position="46"/>
        <end position="57"/>
    </location>
</feature>
<feature type="compositionally biased region" description="Polar residues" evidence="3">
    <location>
        <begin position="61"/>
        <end position="72"/>
    </location>
</feature>
<feature type="binding site" evidence="1">
    <location>
        <position position="111"/>
    </location>
    <ligand>
        <name>tetradecanoyl-CoA</name>
        <dbReference type="ChEBI" id="CHEBI:57385"/>
    </ligand>
</feature>
<feature type="binding site" evidence="1">
    <location>
        <position position="116"/>
    </location>
    <ligand>
        <name>tetradecanoyl-CoA</name>
        <dbReference type="ChEBI" id="CHEBI:57385"/>
    </ligand>
</feature>
<feature type="binding site" evidence="1">
    <location>
        <position position="244"/>
    </location>
    <ligand>
        <name>tetradecanoyl-CoA</name>
        <dbReference type="ChEBI" id="CHEBI:57385"/>
    </ligand>
</feature>
<feature type="binding site" evidence="1">
    <location>
        <position position="246"/>
    </location>
    <ligand>
        <name>tetradecanoyl-CoA</name>
        <dbReference type="ChEBI" id="CHEBI:57385"/>
    </ligand>
</feature>
<feature type="binding site" evidence="1">
    <location>
        <position position="252"/>
    </location>
    <ligand>
        <name>tetradecanoyl-CoA</name>
        <dbReference type="ChEBI" id="CHEBI:57385"/>
    </ligand>
</feature>
<feature type="binding site" evidence="1">
    <location>
        <position position="254"/>
    </location>
    <ligand>
        <name>tetradecanoyl-CoA</name>
        <dbReference type="ChEBI" id="CHEBI:57385"/>
    </ligand>
</feature>
<feature type="binding site" evidence="1">
    <location>
        <position position="255"/>
    </location>
    <ligand>
        <name>tetradecanoyl-CoA</name>
        <dbReference type="ChEBI" id="CHEBI:57385"/>
    </ligand>
</feature>
<feature type="binding site" evidence="1">
    <location>
        <position position="256"/>
    </location>
    <ligand>
        <name>tetradecanoyl-CoA</name>
        <dbReference type="ChEBI" id="CHEBI:57385"/>
    </ligand>
</feature>
<protein>
    <recommendedName>
        <fullName evidence="1">Glycylpeptide N-tetradecanoyltransferase 2</fullName>
        <ecNumber evidence="1">2.3.1.97</ecNumber>
    </recommendedName>
    <alternativeName>
        <fullName evidence="1">Myristoyl-CoA:protein N-myristoyltransferase 2</fullName>
        <shortName evidence="1">NMT 2</shortName>
    </alternativeName>
    <alternativeName>
        <fullName evidence="1">Peptide N-myristoyltransferase 2</fullName>
    </alternativeName>
    <alternativeName>
        <fullName evidence="1">Type II N-myristoyltransferase</fullName>
    </alternativeName>
</protein>
<comment type="function">
    <text evidence="1">Adds a myristoyl group to the N-terminal glycine residue of certain cellular and viral proteins. Also able to mediate N-terminal lysine myristoylation of proteins.</text>
</comment>
<comment type="catalytic activity">
    <reaction evidence="1">
        <text>N-terminal glycyl-[protein] + tetradecanoyl-CoA = N-tetradecanoylglycyl-[protein] + CoA + H(+)</text>
        <dbReference type="Rhea" id="RHEA:15521"/>
        <dbReference type="Rhea" id="RHEA-COMP:12666"/>
        <dbReference type="Rhea" id="RHEA-COMP:12667"/>
        <dbReference type="ChEBI" id="CHEBI:15378"/>
        <dbReference type="ChEBI" id="CHEBI:57287"/>
        <dbReference type="ChEBI" id="CHEBI:57385"/>
        <dbReference type="ChEBI" id="CHEBI:64723"/>
        <dbReference type="ChEBI" id="CHEBI:133050"/>
        <dbReference type="EC" id="2.3.1.97"/>
    </reaction>
</comment>
<comment type="catalytic activity">
    <reaction evidence="1">
        <text>N-terminal glycyl-L-lysyl-[protein] + tetradecanoyl-CoA = N-terminal glycyl-(N(6)-tetradecanoyl)-L-lysyl-[protein] + CoA + H(+)</text>
        <dbReference type="Rhea" id="RHEA:70671"/>
        <dbReference type="Rhea" id="RHEA-COMP:17947"/>
        <dbReference type="Rhea" id="RHEA-COMP:17948"/>
        <dbReference type="ChEBI" id="CHEBI:15378"/>
        <dbReference type="ChEBI" id="CHEBI:57287"/>
        <dbReference type="ChEBI" id="CHEBI:57385"/>
        <dbReference type="ChEBI" id="CHEBI:189855"/>
        <dbReference type="ChEBI" id="CHEBI:189856"/>
    </reaction>
    <physiologicalReaction direction="left-to-right" evidence="1">
        <dbReference type="Rhea" id="RHEA:70672"/>
    </physiologicalReaction>
</comment>
<comment type="subcellular location">
    <subcellularLocation>
        <location evidence="1">Cytoplasm</location>
    </subcellularLocation>
    <subcellularLocation>
        <location evidence="1">Membrane</location>
        <topology evidence="1">Peripheral membrane protein</topology>
    </subcellularLocation>
</comment>
<comment type="similarity">
    <text evidence="2">Belongs to the NMT family.</text>
</comment>
<proteinExistence type="evidence at transcript level"/>
<evidence type="ECO:0000250" key="1">
    <source>
        <dbReference type="UniProtKB" id="O60551"/>
    </source>
</evidence>
<evidence type="ECO:0000255" key="2"/>
<evidence type="ECO:0000256" key="3">
    <source>
        <dbReference type="SAM" id="MobiDB-lite"/>
    </source>
</evidence>
<evidence type="ECO:0000305" key="4"/>
<evidence type="ECO:0000312" key="5">
    <source>
        <dbReference type="EMBL" id="AAI15324.1"/>
    </source>
</evidence>
<evidence type="ECO:0000312" key="6">
    <source>
        <dbReference type="ZFIN" id="ZDB-GENE-030131-717"/>
    </source>
</evidence>
<gene>
    <name evidence="5 6" type="primary">nmt2</name>
</gene>
<name>NMT2_DANRE</name>
<dbReference type="EC" id="2.3.1.97" evidence="1"/>
<dbReference type="EMBL" id="BX322614">
    <property type="status" value="NOT_ANNOTATED_CDS"/>
    <property type="molecule type" value="Genomic_DNA"/>
</dbReference>
<dbReference type="EMBL" id="BC115323">
    <property type="protein sequence ID" value="AAI15324.1"/>
    <property type="molecule type" value="mRNA"/>
</dbReference>
<dbReference type="RefSeq" id="NP_001186683.1">
    <property type="nucleotide sequence ID" value="NM_001199754.1"/>
</dbReference>
<dbReference type="SMR" id="A7YT82"/>
<dbReference type="FunCoup" id="A7YT82">
    <property type="interactions" value="2333"/>
</dbReference>
<dbReference type="STRING" id="7955.ENSDARP00000124979"/>
<dbReference type="PaxDb" id="7955-ENSDARP00000024632"/>
<dbReference type="PeptideAtlas" id="A7YT82"/>
<dbReference type="GeneID" id="556483"/>
<dbReference type="KEGG" id="dre:556483"/>
<dbReference type="AGR" id="ZFIN:ZDB-GENE-030131-717"/>
<dbReference type="CTD" id="9397"/>
<dbReference type="ZFIN" id="ZDB-GENE-030131-717">
    <property type="gene designation" value="nmt2"/>
</dbReference>
<dbReference type="eggNOG" id="KOG2779">
    <property type="taxonomic scope" value="Eukaryota"/>
</dbReference>
<dbReference type="InParanoid" id="A7YT82"/>
<dbReference type="OMA" id="CPAMESE"/>
<dbReference type="OrthoDB" id="60315at2759"/>
<dbReference type="Reactome" id="R-DRE-2514859">
    <property type="pathway name" value="Inactivation, recovery and regulation of the phototransduction cascade"/>
</dbReference>
<dbReference type="PRO" id="PR:A7YT82"/>
<dbReference type="Proteomes" id="UP000000437">
    <property type="component" value="Chromosome 16"/>
</dbReference>
<dbReference type="GO" id="GO:0005829">
    <property type="term" value="C:cytosol"/>
    <property type="evidence" value="ECO:0000318"/>
    <property type="project" value="GO_Central"/>
</dbReference>
<dbReference type="GO" id="GO:0016020">
    <property type="term" value="C:membrane"/>
    <property type="evidence" value="ECO:0007669"/>
    <property type="project" value="UniProtKB-SubCell"/>
</dbReference>
<dbReference type="GO" id="GO:0004379">
    <property type="term" value="F:glycylpeptide N-tetradecanoyltransferase activity"/>
    <property type="evidence" value="ECO:0000250"/>
    <property type="project" value="UniProtKB"/>
</dbReference>
<dbReference type="GO" id="GO:0018030">
    <property type="term" value="F:peptidyl-lysine N6-myristoyltransferase activity"/>
    <property type="evidence" value="ECO:0000250"/>
    <property type="project" value="UniProtKB"/>
</dbReference>
<dbReference type="GO" id="GO:0018008">
    <property type="term" value="P:N-terminal peptidyl-glycine N-myristoylation"/>
    <property type="evidence" value="ECO:0000250"/>
    <property type="project" value="UniProtKB"/>
</dbReference>
<dbReference type="GO" id="GO:0072657">
    <property type="term" value="P:protein localization to membrane"/>
    <property type="evidence" value="ECO:0000318"/>
    <property type="project" value="GO_Central"/>
</dbReference>
<dbReference type="FunFam" id="3.40.630.170:FF:000001">
    <property type="entry name" value="Glycylpeptide N-tetradecanoyltransferase"/>
    <property type="match status" value="1"/>
</dbReference>
<dbReference type="Gene3D" id="3.40.630.170">
    <property type="match status" value="1"/>
</dbReference>
<dbReference type="InterPro" id="IPR016181">
    <property type="entry name" value="Acyl_CoA_acyltransferase"/>
</dbReference>
<dbReference type="InterPro" id="IPR000903">
    <property type="entry name" value="NMT"/>
</dbReference>
<dbReference type="InterPro" id="IPR022677">
    <property type="entry name" value="NMT_C"/>
</dbReference>
<dbReference type="InterPro" id="IPR022678">
    <property type="entry name" value="NMT_CS"/>
</dbReference>
<dbReference type="InterPro" id="IPR022676">
    <property type="entry name" value="NMT_N"/>
</dbReference>
<dbReference type="PANTHER" id="PTHR11377:SF14">
    <property type="entry name" value="GLYCYLPEPTIDE N-TETRADECANOYLTRANSFERASE 2"/>
    <property type="match status" value="1"/>
</dbReference>
<dbReference type="PANTHER" id="PTHR11377">
    <property type="entry name" value="N-MYRISTOYL TRANSFERASE"/>
    <property type="match status" value="1"/>
</dbReference>
<dbReference type="Pfam" id="PF01233">
    <property type="entry name" value="NMT"/>
    <property type="match status" value="1"/>
</dbReference>
<dbReference type="Pfam" id="PF02799">
    <property type="entry name" value="NMT_C"/>
    <property type="match status" value="1"/>
</dbReference>
<dbReference type="PIRSF" id="PIRSF015892">
    <property type="entry name" value="N-myristl_transf"/>
    <property type="match status" value="1"/>
</dbReference>
<dbReference type="SUPFAM" id="SSF55729">
    <property type="entry name" value="Acyl-CoA N-acyltransferases (Nat)"/>
    <property type="match status" value="2"/>
</dbReference>
<dbReference type="PROSITE" id="PS00975">
    <property type="entry name" value="NMT_1"/>
    <property type="match status" value="1"/>
</dbReference>
<dbReference type="PROSITE" id="PS00976">
    <property type="entry name" value="NMT_2"/>
    <property type="match status" value="1"/>
</dbReference>
<reference key="1">
    <citation type="journal article" date="2013" name="Nature">
        <title>The zebrafish reference genome sequence and its relationship to the human genome.</title>
        <authorList>
            <person name="Howe K."/>
            <person name="Clark M.D."/>
            <person name="Torroja C.F."/>
            <person name="Torrance J."/>
            <person name="Berthelot C."/>
            <person name="Muffato M."/>
            <person name="Collins J.E."/>
            <person name="Humphray S."/>
            <person name="McLaren K."/>
            <person name="Matthews L."/>
            <person name="McLaren S."/>
            <person name="Sealy I."/>
            <person name="Caccamo M."/>
            <person name="Churcher C."/>
            <person name="Scott C."/>
            <person name="Barrett J.C."/>
            <person name="Koch R."/>
            <person name="Rauch G.J."/>
            <person name="White S."/>
            <person name="Chow W."/>
            <person name="Kilian B."/>
            <person name="Quintais L.T."/>
            <person name="Guerra-Assuncao J.A."/>
            <person name="Zhou Y."/>
            <person name="Gu Y."/>
            <person name="Yen J."/>
            <person name="Vogel J.H."/>
            <person name="Eyre T."/>
            <person name="Redmond S."/>
            <person name="Banerjee R."/>
            <person name="Chi J."/>
            <person name="Fu B."/>
            <person name="Langley E."/>
            <person name="Maguire S.F."/>
            <person name="Laird G.K."/>
            <person name="Lloyd D."/>
            <person name="Kenyon E."/>
            <person name="Donaldson S."/>
            <person name="Sehra H."/>
            <person name="Almeida-King J."/>
            <person name="Loveland J."/>
            <person name="Trevanion S."/>
            <person name="Jones M."/>
            <person name="Quail M."/>
            <person name="Willey D."/>
            <person name="Hunt A."/>
            <person name="Burton J."/>
            <person name="Sims S."/>
            <person name="McLay K."/>
            <person name="Plumb B."/>
            <person name="Davis J."/>
            <person name="Clee C."/>
            <person name="Oliver K."/>
            <person name="Clark R."/>
            <person name="Riddle C."/>
            <person name="Elliot D."/>
            <person name="Threadgold G."/>
            <person name="Harden G."/>
            <person name="Ware D."/>
            <person name="Begum S."/>
            <person name="Mortimore B."/>
            <person name="Kerry G."/>
            <person name="Heath P."/>
            <person name="Phillimore B."/>
            <person name="Tracey A."/>
            <person name="Corby N."/>
            <person name="Dunn M."/>
            <person name="Johnson C."/>
            <person name="Wood J."/>
            <person name="Clark S."/>
            <person name="Pelan S."/>
            <person name="Griffiths G."/>
            <person name="Smith M."/>
            <person name="Glithero R."/>
            <person name="Howden P."/>
            <person name="Barker N."/>
            <person name="Lloyd C."/>
            <person name="Stevens C."/>
            <person name="Harley J."/>
            <person name="Holt K."/>
            <person name="Panagiotidis G."/>
            <person name="Lovell J."/>
            <person name="Beasley H."/>
            <person name="Henderson C."/>
            <person name="Gordon D."/>
            <person name="Auger K."/>
            <person name="Wright D."/>
            <person name="Collins J."/>
            <person name="Raisen C."/>
            <person name="Dyer L."/>
            <person name="Leung K."/>
            <person name="Robertson L."/>
            <person name="Ambridge K."/>
            <person name="Leongamornlert D."/>
            <person name="McGuire S."/>
            <person name="Gilderthorp R."/>
            <person name="Griffiths C."/>
            <person name="Manthravadi D."/>
            <person name="Nichol S."/>
            <person name="Barker G."/>
            <person name="Whitehead S."/>
            <person name="Kay M."/>
            <person name="Brown J."/>
            <person name="Murnane C."/>
            <person name="Gray E."/>
            <person name="Humphries M."/>
            <person name="Sycamore N."/>
            <person name="Barker D."/>
            <person name="Saunders D."/>
            <person name="Wallis J."/>
            <person name="Babbage A."/>
            <person name="Hammond S."/>
            <person name="Mashreghi-Mohammadi M."/>
            <person name="Barr L."/>
            <person name="Martin S."/>
            <person name="Wray P."/>
            <person name="Ellington A."/>
            <person name="Matthews N."/>
            <person name="Ellwood M."/>
            <person name="Woodmansey R."/>
            <person name="Clark G."/>
            <person name="Cooper J."/>
            <person name="Tromans A."/>
            <person name="Grafham D."/>
            <person name="Skuce C."/>
            <person name="Pandian R."/>
            <person name="Andrews R."/>
            <person name="Harrison E."/>
            <person name="Kimberley A."/>
            <person name="Garnett J."/>
            <person name="Fosker N."/>
            <person name="Hall R."/>
            <person name="Garner P."/>
            <person name="Kelly D."/>
            <person name="Bird C."/>
            <person name="Palmer S."/>
            <person name="Gehring I."/>
            <person name="Berger A."/>
            <person name="Dooley C.M."/>
            <person name="Ersan-Urun Z."/>
            <person name="Eser C."/>
            <person name="Geiger H."/>
            <person name="Geisler M."/>
            <person name="Karotki L."/>
            <person name="Kirn A."/>
            <person name="Konantz J."/>
            <person name="Konantz M."/>
            <person name="Oberlander M."/>
            <person name="Rudolph-Geiger S."/>
            <person name="Teucke M."/>
            <person name="Lanz C."/>
            <person name="Raddatz G."/>
            <person name="Osoegawa K."/>
            <person name="Zhu B."/>
            <person name="Rapp A."/>
            <person name="Widaa S."/>
            <person name="Langford C."/>
            <person name="Yang F."/>
            <person name="Schuster S.C."/>
            <person name="Carter N.P."/>
            <person name="Harrow J."/>
            <person name="Ning Z."/>
            <person name="Herrero J."/>
            <person name="Searle S.M."/>
            <person name="Enright A."/>
            <person name="Geisler R."/>
            <person name="Plasterk R.H."/>
            <person name="Lee C."/>
            <person name="Westerfield M."/>
            <person name="de Jong P.J."/>
            <person name="Zon L.I."/>
            <person name="Postlethwait J.H."/>
            <person name="Nusslein-Volhard C."/>
            <person name="Hubbard T.J."/>
            <person name="Roest Crollius H."/>
            <person name="Rogers J."/>
            <person name="Stemple D.L."/>
        </authorList>
    </citation>
    <scope>NUCLEOTIDE SEQUENCE [LARGE SCALE GENOMIC DNA]</scope>
    <source>
        <strain>Tuebingen</strain>
    </source>
</reference>
<reference evidence="4 5" key="2">
    <citation type="submission" date="2006-04" db="EMBL/GenBank/DDBJ databases">
        <authorList>
            <consortium name="NIH - Zebrafish Gene Collection (ZGC) project"/>
        </authorList>
    </citation>
    <scope>NUCLEOTIDE SEQUENCE [LARGE SCALE MRNA] OF 2-492</scope>
</reference>